<gene>
    <name evidence="1" type="primary">recO</name>
    <name type="ordered locus">YpsIP31758_1138</name>
</gene>
<feature type="chain" id="PRO_1000058569" description="DNA repair protein RecO">
    <location>
        <begin position="1"/>
        <end position="241"/>
    </location>
</feature>
<keyword id="KW-0227">DNA damage</keyword>
<keyword id="KW-0233">DNA recombination</keyword>
<keyword id="KW-0234">DNA repair</keyword>
<organism>
    <name type="scientific">Yersinia pseudotuberculosis serotype O:1b (strain IP 31758)</name>
    <dbReference type="NCBI Taxonomy" id="349747"/>
    <lineage>
        <taxon>Bacteria</taxon>
        <taxon>Pseudomonadati</taxon>
        <taxon>Pseudomonadota</taxon>
        <taxon>Gammaproteobacteria</taxon>
        <taxon>Enterobacterales</taxon>
        <taxon>Yersiniaceae</taxon>
        <taxon>Yersinia</taxon>
    </lineage>
</organism>
<accession>A7FFU1</accession>
<protein>
    <recommendedName>
        <fullName evidence="1">DNA repair protein RecO</fullName>
    </recommendedName>
    <alternativeName>
        <fullName evidence="1">Recombination protein O</fullName>
    </alternativeName>
</protein>
<sequence>MDGWQRAFVLHGRPYSETSLMLDLFTEGEGRMRVLAKGARGRRSNLKGCLQPFTPLLVRWSGRGEVKTLRSAEPVSLALPLSGSMLYSGLYVNELLSRVLEHQTSYSALFFDYLHCLQALAGSDGSPEHALRQFELAMLANLGYGVDFLHCAGSGQPVSDTMTYRYREEKGFIASLVVDHYSFTGRQLLALANREFPDADTLRAAKRFTRIALKPYLGGKPLKSRELFRQFVIKPPADPSP</sequence>
<reference key="1">
    <citation type="journal article" date="2007" name="PLoS Genet.">
        <title>The complete genome sequence of Yersinia pseudotuberculosis IP31758, the causative agent of Far East scarlet-like fever.</title>
        <authorList>
            <person name="Eppinger M."/>
            <person name="Rosovitz M.J."/>
            <person name="Fricke W.F."/>
            <person name="Rasko D.A."/>
            <person name="Kokorina G."/>
            <person name="Fayolle C."/>
            <person name="Lindler L.E."/>
            <person name="Carniel E."/>
            <person name="Ravel J."/>
        </authorList>
    </citation>
    <scope>NUCLEOTIDE SEQUENCE [LARGE SCALE GENOMIC DNA]</scope>
    <source>
        <strain>IP 31758</strain>
    </source>
</reference>
<dbReference type="EMBL" id="CP000720">
    <property type="protein sequence ID" value="ABS47703.1"/>
    <property type="molecule type" value="Genomic_DNA"/>
</dbReference>
<dbReference type="RefSeq" id="WP_002209680.1">
    <property type="nucleotide sequence ID" value="NC_009708.1"/>
</dbReference>
<dbReference type="SMR" id="A7FFU1"/>
<dbReference type="GeneID" id="57975971"/>
<dbReference type="KEGG" id="ypi:YpsIP31758_1138"/>
<dbReference type="HOGENOM" id="CLU_066645_1_0_6"/>
<dbReference type="Proteomes" id="UP000002412">
    <property type="component" value="Chromosome"/>
</dbReference>
<dbReference type="GO" id="GO:0043590">
    <property type="term" value="C:bacterial nucleoid"/>
    <property type="evidence" value="ECO:0007669"/>
    <property type="project" value="TreeGrafter"/>
</dbReference>
<dbReference type="GO" id="GO:0006310">
    <property type="term" value="P:DNA recombination"/>
    <property type="evidence" value="ECO:0007669"/>
    <property type="project" value="UniProtKB-UniRule"/>
</dbReference>
<dbReference type="GO" id="GO:0006302">
    <property type="term" value="P:double-strand break repair"/>
    <property type="evidence" value="ECO:0007669"/>
    <property type="project" value="TreeGrafter"/>
</dbReference>
<dbReference type="Gene3D" id="2.40.50.140">
    <property type="entry name" value="Nucleic acid-binding proteins"/>
    <property type="match status" value="1"/>
</dbReference>
<dbReference type="Gene3D" id="1.20.1440.120">
    <property type="entry name" value="Recombination protein O, C-terminal domain"/>
    <property type="match status" value="1"/>
</dbReference>
<dbReference type="HAMAP" id="MF_00201">
    <property type="entry name" value="RecO"/>
    <property type="match status" value="1"/>
</dbReference>
<dbReference type="InterPro" id="IPR037278">
    <property type="entry name" value="ARFGAP/RecO"/>
</dbReference>
<dbReference type="InterPro" id="IPR022572">
    <property type="entry name" value="DNA_rep/recomb_RecO_N"/>
</dbReference>
<dbReference type="InterPro" id="IPR012340">
    <property type="entry name" value="NA-bd_OB-fold"/>
</dbReference>
<dbReference type="InterPro" id="IPR003717">
    <property type="entry name" value="RecO"/>
</dbReference>
<dbReference type="InterPro" id="IPR042242">
    <property type="entry name" value="RecO_C"/>
</dbReference>
<dbReference type="NCBIfam" id="TIGR00613">
    <property type="entry name" value="reco"/>
    <property type="match status" value="1"/>
</dbReference>
<dbReference type="PANTHER" id="PTHR33991">
    <property type="entry name" value="DNA REPAIR PROTEIN RECO"/>
    <property type="match status" value="1"/>
</dbReference>
<dbReference type="PANTHER" id="PTHR33991:SF1">
    <property type="entry name" value="DNA REPAIR PROTEIN RECO"/>
    <property type="match status" value="1"/>
</dbReference>
<dbReference type="Pfam" id="PF02565">
    <property type="entry name" value="RecO_C"/>
    <property type="match status" value="1"/>
</dbReference>
<dbReference type="Pfam" id="PF11967">
    <property type="entry name" value="RecO_N"/>
    <property type="match status" value="1"/>
</dbReference>
<dbReference type="SUPFAM" id="SSF57863">
    <property type="entry name" value="ArfGap/RecO-like zinc finger"/>
    <property type="match status" value="1"/>
</dbReference>
<dbReference type="SUPFAM" id="SSF50249">
    <property type="entry name" value="Nucleic acid-binding proteins"/>
    <property type="match status" value="1"/>
</dbReference>
<evidence type="ECO:0000255" key="1">
    <source>
        <dbReference type="HAMAP-Rule" id="MF_00201"/>
    </source>
</evidence>
<comment type="function">
    <text evidence="1">Involved in DNA repair and RecF pathway recombination.</text>
</comment>
<comment type="similarity">
    <text evidence="1">Belongs to the RecO family.</text>
</comment>
<proteinExistence type="inferred from homology"/>
<name>RECO_YERP3</name>